<gene>
    <name evidence="1" type="primary">ubiE</name>
    <name type="ordered locus">YpAngola_A3641</name>
</gene>
<organism>
    <name type="scientific">Yersinia pestis bv. Antiqua (strain Angola)</name>
    <dbReference type="NCBI Taxonomy" id="349746"/>
    <lineage>
        <taxon>Bacteria</taxon>
        <taxon>Pseudomonadati</taxon>
        <taxon>Pseudomonadota</taxon>
        <taxon>Gammaproteobacteria</taxon>
        <taxon>Enterobacterales</taxon>
        <taxon>Yersiniaceae</taxon>
        <taxon>Yersinia</taxon>
    </lineage>
</organism>
<proteinExistence type="inferred from homology"/>
<evidence type="ECO:0000255" key="1">
    <source>
        <dbReference type="HAMAP-Rule" id="MF_01813"/>
    </source>
</evidence>
<dbReference type="EC" id="2.1.1.163" evidence="1"/>
<dbReference type="EC" id="2.1.1.201" evidence="1"/>
<dbReference type="EMBL" id="CP000901">
    <property type="protein sequence ID" value="ABX86119.1"/>
    <property type="molecule type" value="Genomic_DNA"/>
</dbReference>
<dbReference type="RefSeq" id="WP_002224024.1">
    <property type="nucleotide sequence ID" value="NZ_CP009935.1"/>
</dbReference>
<dbReference type="SMR" id="A9R431"/>
<dbReference type="GeneID" id="49787763"/>
<dbReference type="KEGG" id="ypg:YpAngola_A3641"/>
<dbReference type="PATRIC" id="fig|349746.12.peg.343"/>
<dbReference type="UniPathway" id="UPA00079">
    <property type="reaction ID" value="UER00169"/>
</dbReference>
<dbReference type="UniPathway" id="UPA00232"/>
<dbReference type="GO" id="GO:0008425">
    <property type="term" value="F:2-methoxy-6-polyprenyl-1,4-benzoquinol methyltransferase activity"/>
    <property type="evidence" value="ECO:0007669"/>
    <property type="project" value="UniProtKB-UniRule"/>
</dbReference>
<dbReference type="GO" id="GO:0043770">
    <property type="term" value="F:demethylmenaquinone methyltransferase activity"/>
    <property type="evidence" value="ECO:0007669"/>
    <property type="project" value="UniProtKB-UniRule"/>
</dbReference>
<dbReference type="GO" id="GO:0009060">
    <property type="term" value="P:aerobic respiration"/>
    <property type="evidence" value="ECO:0007669"/>
    <property type="project" value="UniProtKB-UniRule"/>
</dbReference>
<dbReference type="GO" id="GO:0009234">
    <property type="term" value="P:menaquinone biosynthetic process"/>
    <property type="evidence" value="ECO:0007669"/>
    <property type="project" value="UniProtKB-UniRule"/>
</dbReference>
<dbReference type="GO" id="GO:0032259">
    <property type="term" value="P:methylation"/>
    <property type="evidence" value="ECO:0007669"/>
    <property type="project" value="UniProtKB-KW"/>
</dbReference>
<dbReference type="CDD" id="cd02440">
    <property type="entry name" value="AdoMet_MTases"/>
    <property type="match status" value="1"/>
</dbReference>
<dbReference type="FunFam" id="3.40.50.150:FF:000014">
    <property type="entry name" value="Ubiquinone/menaquinone biosynthesis C-methyltransferase UbiE"/>
    <property type="match status" value="1"/>
</dbReference>
<dbReference type="Gene3D" id="3.40.50.150">
    <property type="entry name" value="Vaccinia Virus protein VP39"/>
    <property type="match status" value="1"/>
</dbReference>
<dbReference type="HAMAP" id="MF_01813">
    <property type="entry name" value="MenG_UbiE_methyltr"/>
    <property type="match status" value="1"/>
</dbReference>
<dbReference type="InterPro" id="IPR029063">
    <property type="entry name" value="SAM-dependent_MTases_sf"/>
</dbReference>
<dbReference type="InterPro" id="IPR004033">
    <property type="entry name" value="UbiE/COQ5_MeTrFase"/>
</dbReference>
<dbReference type="InterPro" id="IPR023576">
    <property type="entry name" value="UbiE/COQ5_MeTrFase_CS"/>
</dbReference>
<dbReference type="NCBIfam" id="TIGR01934">
    <property type="entry name" value="MenG_MenH_UbiE"/>
    <property type="match status" value="1"/>
</dbReference>
<dbReference type="NCBIfam" id="NF001240">
    <property type="entry name" value="PRK00216.1-1"/>
    <property type="match status" value="1"/>
</dbReference>
<dbReference type="NCBIfam" id="NF001242">
    <property type="entry name" value="PRK00216.1-3"/>
    <property type="match status" value="1"/>
</dbReference>
<dbReference type="NCBIfam" id="NF001244">
    <property type="entry name" value="PRK00216.1-5"/>
    <property type="match status" value="1"/>
</dbReference>
<dbReference type="PANTHER" id="PTHR43591:SF24">
    <property type="entry name" value="2-METHOXY-6-POLYPRENYL-1,4-BENZOQUINOL METHYLASE, MITOCHONDRIAL"/>
    <property type="match status" value="1"/>
</dbReference>
<dbReference type="PANTHER" id="PTHR43591">
    <property type="entry name" value="METHYLTRANSFERASE"/>
    <property type="match status" value="1"/>
</dbReference>
<dbReference type="Pfam" id="PF01209">
    <property type="entry name" value="Ubie_methyltran"/>
    <property type="match status" value="1"/>
</dbReference>
<dbReference type="SUPFAM" id="SSF53335">
    <property type="entry name" value="S-adenosyl-L-methionine-dependent methyltransferases"/>
    <property type="match status" value="1"/>
</dbReference>
<dbReference type="PROSITE" id="PS51608">
    <property type="entry name" value="SAM_MT_UBIE"/>
    <property type="match status" value="1"/>
</dbReference>
<dbReference type="PROSITE" id="PS01183">
    <property type="entry name" value="UBIE_1"/>
    <property type="match status" value="1"/>
</dbReference>
<dbReference type="PROSITE" id="PS01184">
    <property type="entry name" value="UBIE_2"/>
    <property type="match status" value="1"/>
</dbReference>
<accession>A9R431</accession>
<reference key="1">
    <citation type="journal article" date="2010" name="J. Bacteriol.">
        <title>Genome sequence of the deep-rooted Yersinia pestis strain Angola reveals new insights into the evolution and pangenome of the plague bacterium.</title>
        <authorList>
            <person name="Eppinger M."/>
            <person name="Worsham P.L."/>
            <person name="Nikolich M.P."/>
            <person name="Riley D.R."/>
            <person name="Sebastian Y."/>
            <person name="Mou S."/>
            <person name="Achtman M."/>
            <person name="Lindler L.E."/>
            <person name="Ravel J."/>
        </authorList>
    </citation>
    <scope>NUCLEOTIDE SEQUENCE [LARGE SCALE GENOMIC DNA]</scope>
    <source>
        <strain>Angola</strain>
    </source>
</reference>
<name>UBIE_YERPG</name>
<comment type="function">
    <text evidence="1">Methyltransferase required for the conversion of demethylmenaquinol (DMKH2) to menaquinol (MKH2) and the conversion of 2-polyprenyl-6-methoxy-1,4-benzoquinol (DDMQH2) to 2-polyprenyl-3-methyl-6-methoxy-1,4-benzoquinol (DMQH2).</text>
</comment>
<comment type="catalytic activity">
    <reaction evidence="1">
        <text>a 2-demethylmenaquinol + S-adenosyl-L-methionine = a menaquinol + S-adenosyl-L-homocysteine + H(+)</text>
        <dbReference type="Rhea" id="RHEA:42640"/>
        <dbReference type="Rhea" id="RHEA-COMP:9539"/>
        <dbReference type="Rhea" id="RHEA-COMP:9563"/>
        <dbReference type="ChEBI" id="CHEBI:15378"/>
        <dbReference type="ChEBI" id="CHEBI:18151"/>
        <dbReference type="ChEBI" id="CHEBI:55437"/>
        <dbReference type="ChEBI" id="CHEBI:57856"/>
        <dbReference type="ChEBI" id="CHEBI:59789"/>
        <dbReference type="EC" id="2.1.1.163"/>
    </reaction>
</comment>
<comment type="catalytic activity">
    <reaction evidence="1">
        <text>a 2-methoxy-6-(all-trans-polyprenyl)benzene-1,4-diol + S-adenosyl-L-methionine = a 5-methoxy-2-methyl-3-(all-trans-polyprenyl)benzene-1,4-diol + S-adenosyl-L-homocysteine + H(+)</text>
        <dbReference type="Rhea" id="RHEA:28286"/>
        <dbReference type="Rhea" id="RHEA-COMP:10858"/>
        <dbReference type="Rhea" id="RHEA-COMP:10859"/>
        <dbReference type="ChEBI" id="CHEBI:15378"/>
        <dbReference type="ChEBI" id="CHEBI:57856"/>
        <dbReference type="ChEBI" id="CHEBI:59789"/>
        <dbReference type="ChEBI" id="CHEBI:84166"/>
        <dbReference type="ChEBI" id="CHEBI:84167"/>
        <dbReference type="EC" id="2.1.1.201"/>
    </reaction>
</comment>
<comment type="pathway">
    <text evidence="1">Quinol/quinone metabolism; menaquinone biosynthesis; menaquinol from 1,4-dihydroxy-2-naphthoate: step 2/2.</text>
</comment>
<comment type="pathway">
    <text evidence="1">Cofactor biosynthesis; ubiquinone biosynthesis.</text>
</comment>
<comment type="similarity">
    <text evidence="1">Belongs to the class I-like SAM-binding methyltransferase superfamily. MenG/UbiE family.</text>
</comment>
<protein>
    <recommendedName>
        <fullName evidence="1">Ubiquinone/menaquinone biosynthesis C-methyltransferase UbiE</fullName>
        <ecNumber evidence="1">2.1.1.163</ecNumber>
        <ecNumber evidence="1">2.1.1.201</ecNumber>
    </recommendedName>
    <alternativeName>
        <fullName evidence="1">2-methoxy-6-polyprenyl-1,4-benzoquinol methylase</fullName>
    </alternativeName>
    <alternativeName>
        <fullName evidence="1">Demethylmenaquinone methyltransferase</fullName>
    </alternativeName>
</protein>
<keyword id="KW-0474">Menaquinone biosynthesis</keyword>
<keyword id="KW-0489">Methyltransferase</keyword>
<keyword id="KW-0949">S-adenosyl-L-methionine</keyword>
<keyword id="KW-0808">Transferase</keyword>
<keyword id="KW-0831">Ubiquinone biosynthesis</keyword>
<sequence>MVDQEKETTHFGFRTVAKEQKEGMVAEVFHSVAAKYDLMNDLMSFGVHRIWKRFTVDCSGVRRGQRVLDLAGGTGDLTAKFSRLVGEQGEVILADINESMLRMGREKLRDKGIVGNVSYVQANAEALPFPDNYFDCITISFGLRNVTEKEKALRSMFRVLKPGGRLLVLEFSKPLLEPLSKAYDAYSFHILPKIGELVAQDAESYRYLAESIRMHPDQETLKGMMADAGFENVTYSNLTGGIVALHRGFKF</sequence>
<feature type="chain" id="PRO_1000187825" description="Ubiquinone/menaquinone biosynthesis C-methyltransferase UbiE">
    <location>
        <begin position="1"/>
        <end position="251"/>
    </location>
</feature>
<feature type="binding site" evidence="1">
    <location>
        <position position="74"/>
    </location>
    <ligand>
        <name>S-adenosyl-L-methionine</name>
        <dbReference type="ChEBI" id="CHEBI:59789"/>
    </ligand>
</feature>
<feature type="binding site" evidence="1">
    <location>
        <position position="95"/>
    </location>
    <ligand>
        <name>S-adenosyl-L-methionine</name>
        <dbReference type="ChEBI" id="CHEBI:59789"/>
    </ligand>
</feature>
<feature type="binding site" evidence="1">
    <location>
        <begin position="123"/>
        <end position="124"/>
    </location>
    <ligand>
        <name>S-adenosyl-L-methionine</name>
        <dbReference type="ChEBI" id="CHEBI:59789"/>
    </ligand>
</feature>
<feature type="binding site" evidence="1">
    <location>
        <position position="140"/>
    </location>
    <ligand>
        <name>S-adenosyl-L-methionine</name>
        <dbReference type="ChEBI" id="CHEBI:59789"/>
    </ligand>
</feature>